<gene>
    <name type="ordered locus">SP70585_0986</name>
</gene>
<sequence length="71" mass="8435">MRKSFYTWLMTERNPKSNSPKAILADLAFEEAAFPKHTDDFDEVSRFLEEHASFSFNLGDFDSIWQEYLEH</sequence>
<feature type="chain" id="PRO_1000185206" description="UPF0346 protein SP70585_0986">
    <location>
        <begin position="1"/>
        <end position="71"/>
    </location>
</feature>
<organism>
    <name type="scientific">Streptococcus pneumoniae (strain 70585)</name>
    <dbReference type="NCBI Taxonomy" id="488221"/>
    <lineage>
        <taxon>Bacteria</taxon>
        <taxon>Bacillati</taxon>
        <taxon>Bacillota</taxon>
        <taxon>Bacilli</taxon>
        <taxon>Lactobacillales</taxon>
        <taxon>Streptococcaceae</taxon>
        <taxon>Streptococcus</taxon>
    </lineage>
</organism>
<proteinExistence type="inferred from homology"/>
<protein>
    <recommendedName>
        <fullName evidence="1">UPF0346 protein SP70585_0986</fullName>
    </recommendedName>
</protein>
<evidence type="ECO:0000255" key="1">
    <source>
        <dbReference type="HAMAP-Rule" id="MF_01538"/>
    </source>
</evidence>
<reference key="1">
    <citation type="journal article" date="2010" name="Genome Biol.">
        <title>Structure and dynamics of the pan-genome of Streptococcus pneumoniae and closely related species.</title>
        <authorList>
            <person name="Donati C."/>
            <person name="Hiller N.L."/>
            <person name="Tettelin H."/>
            <person name="Muzzi A."/>
            <person name="Croucher N.J."/>
            <person name="Angiuoli S.V."/>
            <person name="Oggioni M."/>
            <person name="Dunning Hotopp J.C."/>
            <person name="Hu F.Z."/>
            <person name="Riley D.R."/>
            <person name="Covacci A."/>
            <person name="Mitchell T.J."/>
            <person name="Bentley S.D."/>
            <person name="Kilian M."/>
            <person name="Ehrlich G.D."/>
            <person name="Rappuoli R."/>
            <person name="Moxon E.R."/>
            <person name="Masignani V."/>
        </authorList>
    </citation>
    <scope>NUCLEOTIDE SEQUENCE [LARGE SCALE GENOMIC DNA]</scope>
    <source>
        <strain>70585</strain>
    </source>
</reference>
<dbReference type="EMBL" id="CP000918">
    <property type="protein sequence ID" value="ACO17363.1"/>
    <property type="molecule type" value="Genomic_DNA"/>
</dbReference>
<dbReference type="RefSeq" id="WP_001232082.1">
    <property type="nucleotide sequence ID" value="NC_012468.1"/>
</dbReference>
<dbReference type="SMR" id="C1C6S6"/>
<dbReference type="KEGG" id="snm:SP70585_0986"/>
<dbReference type="HOGENOM" id="CLU_177534_1_0_9"/>
<dbReference type="Proteomes" id="UP000002211">
    <property type="component" value="Chromosome"/>
</dbReference>
<dbReference type="Gene3D" id="1.10.150.260">
    <property type="entry name" value="YozE SAM-like"/>
    <property type="match status" value="1"/>
</dbReference>
<dbReference type="HAMAP" id="MF_01538">
    <property type="entry name" value="UPF0346"/>
    <property type="match status" value="1"/>
</dbReference>
<dbReference type="InterPro" id="IPR010673">
    <property type="entry name" value="UPF0346"/>
</dbReference>
<dbReference type="InterPro" id="IPR023089">
    <property type="entry name" value="YozE_SAM-like"/>
</dbReference>
<dbReference type="InterPro" id="IPR036806">
    <property type="entry name" value="YozE_SAM-like_sf"/>
</dbReference>
<dbReference type="NCBIfam" id="NF010193">
    <property type="entry name" value="PRK13672.1"/>
    <property type="match status" value="1"/>
</dbReference>
<dbReference type="Pfam" id="PF06855">
    <property type="entry name" value="YozE_SAM_like"/>
    <property type="match status" value="1"/>
</dbReference>
<dbReference type="PIRSF" id="PIRSF037262">
    <property type="entry name" value="UCP037262"/>
    <property type="match status" value="1"/>
</dbReference>
<dbReference type="SUPFAM" id="SSF140652">
    <property type="entry name" value="YozE-like"/>
    <property type="match status" value="1"/>
</dbReference>
<name>Y986_STRP7</name>
<comment type="similarity">
    <text evidence="1">Belongs to the UPF0346 family.</text>
</comment>
<accession>C1C6S6</accession>